<accession>Q7U9Q6</accession>
<reference key="1">
    <citation type="journal article" date="2003" name="Nature">
        <title>The genome of a motile marine Synechococcus.</title>
        <authorList>
            <person name="Palenik B."/>
            <person name="Brahamsha B."/>
            <person name="Larimer F.W."/>
            <person name="Land M.L."/>
            <person name="Hauser L."/>
            <person name="Chain P."/>
            <person name="Lamerdin J.E."/>
            <person name="Regala W."/>
            <person name="Allen E.E."/>
            <person name="McCarren J."/>
            <person name="Paulsen I.T."/>
            <person name="Dufresne A."/>
            <person name="Partensky F."/>
            <person name="Webb E.A."/>
            <person name="Waterbury J."/>
        </authorList>
    </citation>
    <scope>NUCLEOTIDE SEQUENCE [LARGE SCALE GENOMIC DNA]</scope>
    <source>
        <strain>WH8102</strain>
    </source>
</reference>
<feature type="chain" id="PRO_0000136278" description="Histidine--tRNA ligase">
    <location>
        <begin position="1"/>
        <end position="430"/>
    </location>
</feature>
<sequence length="430" mass="46707">MSQLQSLRGMVDLLPETLQCWQAVEAVAREHFRRSGFGEIRTPLLETTDLFCRGIGEGTDVVGKEMYSFTDRGERACTLRPEGTASVVRAALQHGLLSQGAQKLWYAGPMFRYERPQAGRQRQFHQIGVEWLGAESARSDVEVIALAWDLLAQLGVGGLELEINSLGTPEDRQAYRTALVAWLEQRLDQLDDDSRARLSTNPLRILDSKNKDTQALLEQAPTLADALSSESRQRFDAVQQGLTALGIPFRLNPRLVRGLDYYGHTAFEITSDQLGAQATVCGGGRYNGLIAQLGGAPTPAIGWALGMERLLLVLEAAATADPDGAAARLVATSAPDAYVINRGDQAETMALTLTRGLRAAGLAVELDGSGSAFGKQFKRADRCGARWALVLGDDEAARAEVRLKPLQHEGEDRSWAVADIAAIVETLRTP</sequence>
<name>SYH_PARMW</name>
<dbReference type="EC" id="6.1.1.21" evidence="1"/>
<dbReference type="EMBL" id="BX569689">
    <property type="protein sequence ID" value="CAE06712.1"/>
    <property type="molecule type" value="Genomic_DNA"/>
</dbReference>
<dbReference type="RefSeq" id="WP_011127073.1">
    <property type="nucleotide sequence ID" value="NC_005070.1"/>
</dbReference>
<dbReference type="SMR" id="Q7U9Q6"/>
<dbReference type="STRING" id="84588.SYNW0197"/>
<dbReference type="KEGG" id="syw:SYNW0197"/>
<dbReference type="eggNOG" id="COG0124">
    <property type="taxonomic scope" value="Bacteria"/>
</dbReference>
<dbReference type="HOGENOM" id="CLU_025113_1_0_3"/>
<dbReference type="Proteomes" id="UP000001422">
    <property type="component" value="Chromosome"/>
</dbReference>
<dbReference type="GO" id="GO:0005737">
    <property type="term" value="C:cytoplasm"/>
    <property type="evidence" value="ECO:0007669"/>
    <property type="project" value="UniProtKB-SubCell"/>
</dbReference>
<dbReference type="GO" id="GO:0005524">
    <property type="term" value="F:ATP binding"/>
    <property type="evidence" value="ECO:0007669"/>
    <property type="project" value="UniProtKB-UniRule"/>
</dbReference>
<dbReference type="GO" id="GO:0004821">
    <property type="term" value="F:histidine-tRNA ligase activity"/>
    <property type="evidence" value="ECO:0007669"/>
    <property type="project" value="UniProtKB-UniRule"/>
</dbReference>
<dbReference type="GO" id="GO:0006427">
    <property type="term" value="P:histidyl-tRNA aminoacylation"/>
    <property type="evidence" value="ECO:0007669"/>
    <property type="project" value="UniProtKB-UniRule"/>
</dbReference>
<dbReference type="CDD" id="cd00773">
    <property type="entry name" value="HisRS-like_core"/>
    <property type="match status" value="1"/>
</dbReference>
<dbReference type="CDD" id="cd00859">
    <property type="entry name" value="HisRS_anticodon"/>
    <property type="match status" value="1"/>
</dbReference>
<dbReference type="FunFam" id="3.30.930.10:FF:000005">
    <property type="entry name" value="Histidine--tRNA ligase"/>
    <property type="match status" value="1"/>
</dbReference>
<dbReference type="Gene3D" id="3.40.50.800">
    <property type="entry name" value="Anticodon-binding domain"/>
    <property type="match status" value="1"/>
</dbReference>
<dbReference type="Gene3D" id="3.30.930.10">
    <property type="entry name" value="Bira Bifunctional Protein, Domain 2"/>
    <property type="match status" value="1"/>
</dbReference>
<dbReference type="HAMAP" id="MF_00127">
    <property type="entry name" value="His_tRNA_synth"/>
    <property type="match status" value="1"/>
</dbReference>
<dbReference type="InterPro" id="IPR006195">
    <property type="entry name" value="aa-tRNA-synth_II"/>
</dbReference>
<dbReference type="InterPro" id="IPR045864">
    <property type="entry name" value="aa-tRNA-synth_II/BPL/LPL"/>
</dbReference>
<dbReference type="InterPro" id="IPR004154">
    <property type="entry name" value="Anticodon-bd"/>
</dbReference>
<dbReference type="InterPro" id="IPR036621">
    <property type="entry name" value="Anticodon-bd_dom_sf"/>
</dbReference>
<dbReference type="InterPro" id="IPR015807">
    <property type="entry name" value="His-tRNA-ligase"/>
</dbReference>
<dbReference type="InterPro" id="IPR041715">
    <property type="entry name" value="HisRS-like_core"/>
</dbReference>
<dbReference type="InterPro" id="IPR004516">
    <property type="entry name" value="HisRS/HisZ"/>
</dbReference>
<dbReference type="InterPro" id="IPR033656">
    <property type="entry name" value="HisRS_anticodon"/>
</dbReference>
<dbReference type="NCBIfam" id="TIGR00442">
    <property type="entry name" value="hisS"/>
    <property type="match status" value="1"/>
</dbReference>
<dbReference type="PANTHER" id="PTHR43707:SF1">
    <property type="entry name" value="HISTIDINE--TRNA LIGASE, MITOCHONDRIAL-RELATED"/>
    <property type="match status" value="1"/>
</dbReference>
<dbReference type="PANTHER" id="PTHR43707">
    <property type="entry name" value="HISTIDYL-TRNA SYNTHETASE"/>
    <property type="match status" value="1"/>
</dbReference>
<dbReference type="Pfam" id="PF03129">
    <property type="entry name" value="HGTP_anticodon"/>
    <property type="match status" value="1"/>
</dbReference>
<dbReference type="Pfam" id="PF13393">
    <property type="entry name" value="tRNA-synt_His"/>
    <property type="match status" value="1"/>
</dbReference>
<dbReference type="PIRSF" id="PIRSF001549">
    <property type="entry name" value="His-tRNA_synth"/>
    <property type="match status" value="1"/>
</dbReference>
<dbReference type="SUPFAM" id="SSF52954">
    <property type="entry name" value="Class II aaRS ABD-related"/>
    <property type="match status" value="1"/>
</dbReference>
<dbReference type="SUPFAM" id="SSF55681">
    <property type="entry name" value="Class II aaRS and biotin synthetases"/>
    <property type="match status" value="1"/>
</dbReference>
<dbReference type="PROSITE" id="PS50862">
    <property type="entry name" value="AA_TRNA_LIGASE_II"/>
    <property type="match status" value="1"/>
</dbReference>
<protein>
    <recommendedName>
        <fullName evidence="1">Histidine--tRNA ligase</fullName>
        <ecNumber evidence="1">6.1.1.21</ecNumber>
    </recommendedName>
    <alternativeName>
        <fullName evidence="1">Histidyl-tRNA synthetase</fullName>
        <shortName evidence="1">HisRS</shortName>
    </alternativeName>
</protein>
<organism>
    <name type="scientific">Parasynechococcus marenigrum (strain WH8102)</name>
    <dbReference type="NCBI Taxonomy" id="84588"/>
    <lineage>
        <taxon>Bacteria</taxon>
        <taxon>Bacillati</taxon>
        <taxon>Cyanobacteriota</taxon>
        <taxon>Cyanophyceae</taxon>
        <taxon>Synechococcales</taxon>
        <taxon>Prochlorococcaceae</taxon>
        <taxon>Parasynechococcus</taxon>
        <taxon>Parasynechococcus marenigrum</taxon>
    </lineage>
</organism>
<comment type="catalytic activity">
    <reaction evidence="1">
        <text>tRNA(His) + L-histidine + ATP = L-histidyl-tRNA(His) + AMP + diphosphate + H(+)</text>
        <dbReference type="Rhea" id="RHEA:17313"/>
        <dbReference type="Rhea" id="RHEA-COMP:9665"/>
        <dbReference type="Rhea" id="RHEA-COMP:9689"/>
        <dbReference type="ChEBI" id="CHEBI:15378"/>
        <dbReference type="ChEBI" id="CHEBI:30616"/>
        <dbReference type="ChEBI" id="CHEBI:33019"/>
        <dbReference type="ChEBI" id="CHEBI:57595"/>
        <dbReference type="ChEBI" id="CHEBI:78442"/>
        <dbReference type="ChEBI" id="CHEBI:78527"/>
        <dbReference type="ChEBI" id="CHEBI:456215"/>
        <dbReference type="EC" id="6.1.1.21"/>
    </reaction>
</comment>
<comment type="subunit">
    <text evidence="1">Homodimer.</text>
</comment>
<comment type="subcellular location">
    <subcellularLocation>
        <location evidence="1">Cytoplasm</location>
    </subcellularLocation>
</comment>
<comment type="similarity">
    <text evidence="1">Belongs to the class-II aminoacyl-tRNA synthetase family.</text>
</comment>
<evidence type="ECO:0000255" key="1">
    <source>
        <dbReference type="HAMAP-Rule" id="MF_00127"/>
    </source>
</evidence>
<keyword id="KW-0030">Aminoacyl-tRNA synthetase</keyword>
<keyword id="KW-0067">ATP-binding</keyword>
<keyword id="KW-0963">Cytoplasm</keyword>
<keyword id="KW-0436">Ligase</keyword>
<keyword id="KW-0547">Nucleotide-binding</keyword>
<keyword id="KW-0648">Protein biosynthesis</keyword>
<proteinExistence type="inferred from homology"/>
<gene>
    <name evidence="1" type="primary">hisS</name>
    <name type="ordered locus">SYNW0197</name>
</gene>